<feature type="chain" id="PRO_0000368720" description="ATP synthase subunit b 1">
    <location>
        <begin position="1"/>
        <end position="163"/>
    </location>
</feature>
<feature type="transmembrane region" description="Helical" evidence="1">
    <location>
        <begin position="7"/>
        <end position="27"/>
    </location>
</feature>
<dbReference type="EMBL" id="BX572595">
    <property type="protein sequence ID" value="CAE26287.1"/>
    <property type="molecule type" value="Genomic_DNA"/>
</dbReference>
<dbReference type="RefSeq" id="WP_011156595.1">
    <property type="nucleotide sequence ID" value="NZ_CP116810.1"/>
</dbReference>
<dbReference type="SMR" id="Q6NBI5"/>
<dbReference type="STRING" id="258594.RPA0843"/>
<dbReference type="GeneID" id="66891860"/>
<dbReference type="eggNOG" id="COG0711">
    <property type="taxonomic scope" value="Bacteria"/>
</dbReference>
<dbReference type="HOGENOM" id="CLU_079215_6_1_5"/>
<dbReference type="PhylomeDB" id="Q6NBI5"/>
<dbReference type="GO" id="GO:0005886">
    <property type="term" value="C:plasma membrane"/>
    <property type="evidence" value="ECO:0007669"/>
    <property type="project" value="UniProtKB-SubCell"/>
</dbReference>
<dbReference type="GO" id="GO:0045259">
    <property type="term" value="C:proton-transporting ATP synthase complex"/>
    <property type="evidence" value="ECO:0007669"/>
    <property type="project" value="UniProtKB-KW"/>
</dbReference>
<dbReference type="GO" id="GO:0046933">
    <property type="term" value="F:proton-transporting ATP synthase activity, rotational mechanism"/>
    <property type="evidence" value="ECO:0007669"/>
    <property type="project" value="UniProtKB-UniRule"/>
</dbReference>
<dbReference type="GO" id="GO:0046961">
    <property type="term" value="F:proton-transporting ATPase activity, rotational mechanism"/>
    <property type="evidence" value="ECO:0007669"/>
    <property type="project" value="TreeGrafter"/>
</dbReference>
<dbReference type="CDD" id="cd06503">
    <property type="entry name" value="ATP-synt_Fo_b"/>
    <property type="match status" value="1"/>
</dbReference>
<dbReference type="HAMAP" id="MF_01398">
    <property type="entry name" value="ATP_synth_b_bprime"/>
    <property type="match status" value="1"/>
</dbReference>
<dbReference type="InterPro" id="IPR002146">
    <property type="entry name" value="ATP_synth_b/b'su_bac/chlpt"/>
</dbReference>
<dbReference type="InterPro" id="IPR050059">
    <property type="entry name" value="ATP_synthase_B_chain"/>
</dbReference>
<dbReference type="PANTHER" id="PTHR33445:SF1">
    <property type="entry name" value="ATP SYNTHASE SUBUNIT B"/>
    <property type="match status" value="1"/>
</dbReference>
<dbReference type="PANTHER" id="PTHR33445">
    <property type="entry name" value="ATP SYNTHASE SUBUNIT B', CHLOROPLASTIC"/>
    <property type="match status" value="1"/>
</dbReference>
<dbReference type="Pfam" id="PF00430">
    <property type="entry name" value="ATP-synt_B"/>
    <property type="match status" value="1"/>
</dbReference>
<protein>
    <recommendedName>
        <fullName evidence="1">ATP synthase subunit b 1</fullName>
    </recommendedName>
    <alternativeName>
        <fullName evidence="1">ATP synthase F(0) sector subunit b 1</fullName>
    </alternativeName>
    <alternativeName>
        <fullName evidence="1">ATPase subunit I 1</fullName>
    </alternativeName>
    <alternativeName>
        <fullName evidence="1">F-type ATPase subunit b 1</fullName>
        <shortName evidence="1">F-ATPase subunit b 1</shortName>
    </alternativeName>
</protein>
<reference key="1">
    <citation type="journal article" date="2004" name="Nat. Biotechnol.">
        <title>Complete genome sequence of the metabolically versatile photosynthetic bacterium Rhodopseudomonas palustris.</title>
        <authorList>
            <person name="Larimer F.W."/>
            <person name="Chain P."/>
            <person name="Hauser L."/>
            <person name="Lamerdin J.E."/>
            <person name="Malfatti S."/>
            <person name="Do L."/>
            <person name="Land M.L."/>
            <person name="Pelletier D.A."/>
            <person name="Beatty J.T."/>
            <person name="Lang A.S."/>
            <person name="Tabita F.R."/>
            <person name="Gibson J.L."/>
            <person name="Hanson T.E."/>
            <person name="Bobst C."/>
            <person name="Torres y Torres J.L."/>
            <person name="Peres C."/>
            <person name="Harrison F.H."/>
            <person name="Gibson J."/>
            <person name="Harwood C.S."/>
        </authorList>
    </citation>
    <scope>NUCLEOTIDE SEQUENCE [LARGE SCALE GENOMIC DNA]</scope>
    <source>
        <strain>ATCC BAA-98 / CGA009</strain>
    </source>
</reference>
<accession>Q6NBI5</accession>
<gene>
    <name evidence="1" type="primary">atpF1</name>
    <name type="ordered locus">RPA0843</name>
</gene>
<evidence type="ECO:0000255" key="1">
    <source>
        <dbReference type="HAMAP-Rule" id="MF_01398"/>
    </source>
</evidence>
<comment type="function">
    <text evidence="1">F(1)F(0) ATP synthase produces ATP from ADP in the presence of a proton or sodium gradient. F-type ATPases consist of two structural domains, F(1) containing the extramembraneous catalytic core and F(0) containing the membrane proton channel, linked together by a central stalk and a peripheral stalk. During catalysis, ATP synthesis in the catalytic domain of F(1) is coupled via a rotary mechanism of the central stalk subunits to proton translocation.</text>
</comment>
<comment type="function">
    <text evidence="1">Component of the F(0) channel, it forms part of the peripheral stalk, linking F(1) to F(0).</text>
</comment>
<comment type="subunit">
    <text evidence="1">F-type ATPases have 2 components, F(1) - the catalytic core - and F(0) - the membrane proton channel. F(1) has five subunits: alpha(3), beta(3), gamma(1), delta(1), epsilon(1). F(0) has three main subunits: a(1), b(2) and c(10-14). The alpha and beta chains form an alternating ring which encloses part of the gamma chain. F(1) is attached to F(0) by a central stalk formed by the gamma and epsilon chains, while a peripheral stalk is formed by the delta and b chains.</text>
</comment>
<comment type="subcellular location">
    <subcellularLocation>
        <location evidence="1">Cell inner membrane</location>
        <topology evidence="1">Single-pass membrane protein</topology>
    </subcellularLocation>
</comment>
<comment type="similarity">
    <text evidence="1">Belongs to the ATPase B chain family.</text>
</comment>
<name>ATPF1_RHOPA</name>
<proteinExistence type="inferred from homology"/>
<organism>
    <name type="scientific">Rhodopseudomonas palustris (strain ATCC BAA-98 / CGA009)</name>
    <dbReference type="NCBI Taxonomy" id="258594"/>
    <lineage>
        <taxon>Bacteria</taxon>
        <taxon>Pseudomonadati</taxon>
        <taxon>Pseudomonadota</taxon>
        <taxon>Alphaproteobacteria</taxon>
        <taxon>Hyphomicrobiales</taxon>
        <taxon>Nitrobacteraceae</taxon>
        <taxon>Rhodopseudomonas</taxon>
    </lineage>
</organism>
<keyword id="KW-0066">ATP synthesis</keyword>
<keyword id="KW-0997">Cell inner membrane</keyword>
<keyword id="KW-1003">Cell membrane</keyword>
<keyword id="KW-0138">CF(0)</keyword>
<keyword id="KW-0375">Hydrogen ion transport</keyword>
<keyword id="KW-0406">Ion transport</keyword>
<keyword id="KW-0472">Membrane</keyword>
<keyword id="KW-0812">Transmembrane</keyword>
<keyword id="KW-1133">Transmembrane helix</keyword>
<keyword id="KW-0813">Transport</keyword>
<sequence>MAIFGEAETWVAIAFVILLGVFAYLGVHRTVLQALDKRRDRIKAELDEARKLKDEAAKLLADYRARRASAEREAQAIVDSAKADAERIAAEAKAKLEDFVARRTKTAESKIALAEAQALADVRAAAAEAAVAAASRILSESVKGNLADELLSKGIQEVRGKLN</sequence>